<proteinExistence type="evidence at protein level"/>
<sequence length="687" mass="75218">MEEIVGLREGSPRKPVPLQELWRPCPRIRRNIQGSLEWLKERLFRVGEDWYFLVALGVLMALISYAMNFAIGRVVRAHKWLYREIGDGHLLRYLSWTVYPVALLSFSSGFSQSITPSSGGSGIPEVKTILTGVILEDYLDIKNFGAKVVGLSCTLATGSTIFLGKLGPFVHLSVMIAAYLGRVRTKTVGEPENKTKEMELLAAGAAVGVATVFAAPISGVLFSIEVMSSHFSVWDYWRGFFAATCGAFMFHLLAVFNSEQETITSIYKTSFPVDIPFDLPEIFFFVALGAICGILSCGYNYCQRTSLFFLKSNGFTSKLLATSKPLYSALAAVVLASITYPPGVGRFMASRLSMSEYLETLFDNNSWALMTKNSSPPWSAEPDPQNLWLEWCHPQMTVFGTLVFFLVMKFWMLILATTIPIPAGYFLPIFVYGAAIGRLFGEVLSLAFPEGIVAGGKVSPIMPGAYALAGAAAFSGAVTHTLSTALLAFEVSGQIVHALPVLMAVLAANAICQSYQPSFYDGTIIVKKLPYLPWIRGRKIGSHLVTVGHFMNCTLTTLAKDMPLEEVIKVVISTDVTQYPLVETTESQVLVGIVKRTHLVQSLHTDSASWAPGQQPCLQDILANGCPTQPVTLQLSTETSLHETHNLFELLNLQLLFVTSRGRAVGSVSWVELKKAISTLTNPPAPK</sequence>
<feature type="chain" id="PRO_0000094462" description="Chloride channel protein ClC-Kb">
    <location>
        <begin position="1"/>
        <end position="687"/>
    </location>
</feature>
<feature type="topological domain" description="Cytoplasmic" evidence="2">
    <location>
        <begin position="1"/>
        <end position="50"/>
    </location>
</feature>
<feature type="transmembrane region" description="Helical" evidence="2">
    <location>
        <begin position="51"/>
        <end position="82"/>
    </location>
</feature>
<feature type="transmembrane region" description="Helical" evidence="2">
    <location>
        <begin position="91"/>
        <end position="111"/>
    </location>
</feature>
<feature type="intramembrane region" description="Helical" evidence="2">
    <location>
        <begin position="116"/>
        <end position="127"/>
    </location>
</feature>
<feature type="transmembrane region" description="Helical" evidence="2">
    <location>
        <begin position="141"/>
        <end position="160"/>
    </location>
</feature>
<feature type="transmembrane region" description="Helical" evidence="2">
    <location>
        <begin position="161"/>
        <end position="180"/>
    </location>
</feature>
<feature type="intramembrane region" description="Helical" evidence="2">
    <location>
        <begin position="203"/>
        <end position="224"/>
    </location>
</feature>
<feature type="transmembrane region" description="Helical" evidence="2">
    <location>
        <begin position="236"/>
        <end position="255"/>
    </location>
</feature>
<feature type="transmembrane region" description="Helical" evidence="2">
    <location>
        <begin position="282"/>
        <end position="310"/>
    </location>
</feature>
<feature type="transmembrane region" description="Helical" evidence="2">
    <location>
        <begin position="325"/>
        <end position="342"/>
    </location>
</feature>
<feature type="intramembrane region" description="Helical" evidence="2">
    <location>
        <begin position="349"/>
        <end position="360"/>
    </location>
</feature>
<feature type="transmembrane region" description="Helical" evidence="2">
    <location>
        <begin position="400"/>
        <end position="420"/>
    </location>
</feature>
<feature type="transmembrane region" description="Helical" evidence="2">
    <location>
        <begin position="421"/>
        <end position="440"/>
    </location>
</feature>
<feature type="intramembrane region" description="Helical" evidence="2">
    <location>
        <begin position="464"/>
        <end position="496"/>
    </location>
</feature>
<feature type="transmembrane region" description="Helical" evidence="2">
    <location>
        <begin position="500"/>
        <end position="520"/>
    </location>
</feature>
<feature type="topological domain" description="Cytoplasmic" evidence="2">
    <location>
        <begin position="521"/>
        <end position="687"/>
    </location>
</feature>
<feature type="domain" description="CBS 1" evidence="8">
    <location>
        <begin position="551"/>
        <end position="609"/>
    </location>
</feature>
<feature type="domain" description="CBS 2" evidence="8">
    <location>
        <begin position="626"/>
        <end position="687"/>
    </location>
</feature>
<feature type="binding site" evidence="3">
    <location>
        <position position="121"/>
    </location>
    <ligand>
        <name>chloride</name>
        <dbReference type="ChEBI" id="CHEBI:17996"/>
    </ligand>
</feature>
<feature type="binding site" evidence="1">
    <location>
        <position position="259"/>
    </location>
    <ligand>
        <name>Ca(2+)</name>
        <dbReference type="ChEBI" id="CHEBI:29108"/>
    </ligand>
</feature>
<feature type="binding site" evidence="1">
    <location>
        <position position="261"/>
    </location>
    <ligand>
        <name>Ca(2+)</name>
        <dbReference type="ChEBI" id="CHEBI:29108"/>
    </ligand>
</feature>
<feature type="binding site" evidence="1">
    <location>
        <position position="278"/>
    </location>
    <ligand>
        <name>Ca(2+)</name>
        <dbReference type="ChEBI" id="CHEBI:29108"/>
    </ligand>
</feature>
<feature type="binding site" evidence="1">
    <location>
        <position position="281"/>
    </location>
    <ligand>
        <name>Ca(2+)</name>
        <dbReference type="ChEBI" id="CHEBI:29108"/>
    </ligand>
</feature>
<feature type="binding site" evidence="3">
    <location>
        <position position="426"/>
    </location>
    <ligand>
        <name>chloride</name>
        <dbReference type="ChEBI" id="CHEBI:17996"/>
    </ligand>
</feature>
<feature type="glycosylation site" description="N-linked (GlcNAc...) asparagine" evidence="7">
    <location>
        <position position="193"/>
    </location>
</feature>
<feature type="splice variant" id="VSP_001049" description="In isoform 2." evidence="12">
    <location>
        <begin position="77"/>
        <end position="131"/>
    </location>
</feature>
<accession>P51802</accession>
<name>CLCKB_RAT</name>
<protein>
    <recommendedName>
        <fullName>Chloride channel protein ClC-Kb</fullName>
        <shortName>Chloride channel Kb</shortName>
    </recommendedName>
    <alternativeName>
        <fullName evidence="11">ClC-K2</fullName>
    </alternativeName>
</protein>
<dbReference type="EMBL" id="Z30663">
    <property type="protein sequence ID" value="CAA83143.1"/>
    <property type="molecule type" value="mRNA"/>
</dbReference>
<dbReference type="EMBL" id="D26111">
    <property type="protein sequence ID" value="BAA05106.1"/>
    <property type="molecule type" value="mRNA"/>
</dbReference>
<dbReference type="EMBL" id="D26111">
    <property type="protein sequence ID" value="BAA05107.1"/>
    <property type="molecule type" value="mRNA"/>
</dbReference>
<dbReference type="PIR" id="B57713">
    <property type="entry name" value="B57713"/>
</dbReference>
<dbReference type="RefSeq" id="NP_775126.1">
    <molecule id="P51802-1"/>
    <property type="nucleotide sequence ID" value="NM_173103.1"/>
</dbReference>
<dbReference type="SMR" id="P51802"/>
<dbReference type="FunCoup" id="P51802">
    <property type="interactions" value="4"/>
</dbReference>
<dbReference type="STRING" id="10116.ENSRNOP00000013550"/>
<dbReference type="TCDB" id="2.A.49.2.5">
    <property type="family name" value="the chloride carrier/channel (clc) family"/>
</dbReference>
<dbReference type="GlyCosmos" id="P51802">
    <property type="glycosylation" value="1 site, No reported glycans"/>
</dbReference>
<dbReference type="GlyGen" id="P51802">
    <property type="glycosylation" value="1 site"/>
</dbReference>
<dbReference type="PhosphoSitePlus" id="P51802"/>
<dbReference type="jPOST" id="P51802"/>
<dbReference type="PaxDb" id="10116-ENSRNOP00000013550"/>
<dbReference type="GeneID" id="79430"/>
<dbReference type="KEGG" id="rno:79430"/>
<dbReference type="UCSC" id="RGD:628639">
    <molecule id="P51802-1"/>
    <property type="organism name" value="rat"/>
</dbReference>
<dbReference type="AGR" id="RGD:628639"/>
<dbReference type="CTD" id="1188"/>
<dbReference type="RGD" id="628639">
    <property type="gene designation" value="Clcnkb"/>
</dbReference>
<dbReference type="eggNOG" id="KOG0476">
    <property type="taxonomic scope" value="Eukaryota"/>
</dbReference>
<dbReference type="InParanoid" id="P51802"/>
<dbReference type="OrthoDB" id="4564at2759"/>
<dbReference type="PhylomeDB" id="P51802"/>
<dbReference type="Reactome" id="R-RNO-2672351">
    <property type="pathway name" value="Stimuli-sensing channels"/>
</dbReference>
<dbReference type="PRO" id="PR:P51802"/>
<dbReference type="Proteomes" id="UP000002494">
    <property type="component" value="Unplaced"/>
</dbReference>
<dbReference type="GO" id="GO:0016323">
    <property type="term" value="C:basolateral plasma membrane"/>
    <property type="evidence" value="ECO:0000266"/>
    <property type="project" value="RGD"/>
</dbReference>
<dbReference type="GO" id="GO:0034707">
    <property type="term" value="C:chloride channel complex"/>
    <property type="evidence" value="ECO:0007669"/>
    <property type="project" value="UniProtKB-KW"/>
</dbReference>
<dbReference type="GO" id="GO:0005886">
    <property type="term" value="C:plasma membrane"/>
    <property type="evidence" value="ECO:0000318"/>
    <property type="project" value="GO_Central"/>
</dbReference>
<dbReference type="GO" id="GO:0005254">
    <property type="term" value="F:chloride channel activity"/>
    <property type="evidence" value="ECO:0000314"/>
    <property type="project" value="RGD"/>
</dbReference>
<dbReference type="GO" id="GO:0046872">
    <property type="term" value="F:metal ion binding"/>
    <property type="evidence" value="ECO:0007669"/>
    <property type="project" value="UniProtKB-KW"/>
</dbReference>
<dbReference type="GO" id="GO:0005247">
    <property type="term" value="F:voltage-gated chloride channel activity"/>
    <property type="evidence" value="ECO:0000318"/>
    <property type="project" value="GO_Central"/>
</dbReference>
<dbReference type="GO" id="GO:0006821">
    <property type="term" value="P:chloride transport"/>
    <property type="evidence" value="ECO:0000314"/>
    <property type="project" value="RGD"/>
</dbReference>
<dbReference type="GO" id="GO:0051453">
    <property type="term" value="P:regulation of intracellular pH"/>
    <property type="evidence" value="ECO:0000266"/>
    <property type="project" value="RGD"/>
</dbReference>
<dbReference type="GO" id="GO:0070293">
    <property type="term" value="P:renal absorption"/>
    <property type="evidence" value="ECO:0000266"/>
    <property type="project" value="RGD"/>
</dbReference>
<dbReference type="GO" id="GO:0070294">
    <property type="term" value="P:renal sodium ion absorption"/>
    <property type="evidence" value="ECO:0000266"/>
    <property type="project" value="RGD"/>
</dbReference>
<dbReference type="GO" id="GO:0030321">
    <property type="term" value="P:transepithelial chloride transport"/>
    <property type="evidence" value="ECO:0000266"/>
    <property type="project" value="RGD"/>
</dbReference>
<dbReference type="CDD" id="cd04591">
    <property type="entry name" value="CBS_pair_voltage-gated_CLC_euk_bac"/>
    <property type="match status" value="1"/>
</dbReference>
<dbReference type="CDD" id="cd03683">
    <property type="entry name" value="ClC_1_like"/>
    <property type="match status" value="1"/>
</dbReference>
<dbReference type="FunFam" id="1.10.3080.10:FF:000012">
    <property type="entry name" value="Chloride channel K"/>
    <property type="match status" value="1"/>
</dbReference>
<dbReference type="FunFam" id="3.10.580.10:FF:000028">
    <property type="entry name" value="Chloride channel protein"/>
    <property type="match status" value="1"/>
</dbReference>
<dbReference type="Gene3D" id="3.10.580.10">
    <property type="entry name" value="CBS-domain"/>
    <property type="match status" value="1"/>
</dbReference>
<dbReference type="Gene3D" id="1.10.3080.10">
    <property type="entry name" value="Clc chloride channel"/>
    <property type="match status" value="1"/>
</dbReference>
<dbReference type="InterPro" id="IPR000644">
    <property type="entry name" value="CBS_dom"/>
</dbReference>
<dbReference type="InterPro" id="IPR046342">
    <property type="entry name" value="CBS_dom_sf"/>
</dbReference>
<dbReference type="InterPro" id="IPR014743">
    <property type="entry name" value="Cl-channel_core"/>
</dbReference>
<dbReference type="InterPro" id="IPR002250">
    <property type="entry name" value="Cl_channel-K"/>
</dbReference>
<dbReference type="InterPro" id="IPR050970">
    <property type="entry name" value="Cl_channel_volt-gated"/>
</dbReference>
<dbReference type="InterPro" id="IPR001807">
    <property type="entry name" value="ClC"/>
</dbReference>
<dbReference type="PANTHER" id="PTHR45720">
    <property type="entry name" value="CHLORIDE CHANNEL PROTEIN 2"/>
    <property type="match status" value="1"/>
</dbReference>
<dbReference type="PANTHER" id="PTHR45720:SF2">
    <property type="entry name" value="CHLORIDE CHANNEL PROTEIN CLC-KB"/>
    <property type="match status" value="1"/>
</dbReference>
<dbReference type="Pfam" id="PF00571">
    <property type="entry name" value="CBS"/>
    <property type="match status" value="1"/>
</dbReference>
<dbReference type="Pfam" id="PF00654">
    <property type="entry name" value="Voltage_CLC"/>
    <property type="match status" value="1"/>
</dbReference>
<dbReference type="PRINTS" id="PR00762">
    <property type="entry name" value="CLCHANNEL"/>
</dbReference>
<dbReference type="PRINTS" id="PR01119">
    <property type="entry name" value="CLCHANNELKDY"/>
</dbReference>
<dbReference type="SMART" id="SM00116">
    <property type="entry name" value="CBS"/>
    <property type="match status" value="1"/>
</dbReference>
<dbReference type="SUPFAM" id="SSF54631">
    <property type="entry name" value="CBS-domain pair"/>
    <property type="match status" value="1"/>
</dbReference>
<dbReference type="SUPFAM" id="SSF81340">
    <property type="entry name" value="Clc chloride channel"/>
    <property type="match status" value="1"/>
</dbReference>
<dbReference type="PROSITE" id="PS51371">
    <property type="entry name" value="CBS"/>
    <property type="match status" value="2"/>
</dbReference>
<keyword id="KW-0025">Alternative splicing</keyword>
<keyword id="KW-0106">Calcium</keyword>
<keyword id="KW-0129">CBS domain</keyword>
<keyword id="KW-1003">Cell membrane</keyword>
<keyword id="KW-0868">Chloride</keyword>
<keyword id="KW-0869">Chloride channel</keyword>
<keyword id="KW-0325">Glycoprotein</keyword>
<keyword id="KW-0407">Ion channel</keyword>
<keyword id="KW-0406">Ion transport</keyword>
<keyword id="KW-0472">Membrane</keyword>
<keyword id="KW-0479">Metal-binding</keyword>
<keyword id="KW-1185">Reference proteome</keyword>
<keyword id="KW-0677">Repeat</keyword>
<keyword id="KW-0812">Transmembrane</keyword>
<keyword id="KW-1133">Transmembrane helix</keyword>
<keyword id="KW-0813">Transport</keyword>
<keyword id="KW-0851">Voltage-gated channel</keyword>
<gene>
    <name evidence="14" type="primary">Clcnkb</name>
</gene>
<evidence type="ECO:0000250" key="1"/>
<evidence type="ECO:0000250" key="2">
    <source>
        <dbReference type="UniProtKB" id="P35523"/>
    </source>
</evidence>
<evidence type="ECO:0000250" key="3">
    <source>
        <dbReference type="UniProtKB" id="P37019"/>
    </source>
</evidence>
<evidence type="ECO:0000250" key="4">
    <source>
        <dbReference type="UniProtKB" id="P51800"/>
    </source>
</evidence>
<evidence type="ECO:0000250" key="5">
    <source>
        <dbReference type="UniProtKB" id="P51801"/>
    </source>
</evidence>
<evidence type="ECO:0000250" key="6">
    <source>
        <dbReference type="UniProtKB" id="Q9WUB6"/>
    </source>
</evidence>
<evidence type="ECO:0000255" key="7"/>
<evidence type="ECO:0000255" key="8">
    <source>
        <dbReference type="PROSITE-ProRule" id="PRU00703"/>
    </source>
</evidence>
<evidence type="ECO:0000269" key="9">
    <source>
    </source>
</evidence>
<evidence type="ECO:0000269" key="10">
    <source>
    </source>
</evidence>
<evidence type="ECO:0000303" key="11">
    <source>
    </source>
</evidence>
<evidence type="ECO:0000303" key="12">
    <source>
    </source>
</evidence>
<evidence type="ECO:0000305" key="13"/>
<evidence type="ECO:0000312" key="14">
    <source>
        <dbReference type="RGD" id="628639"/>
    </source>
</evidence>
<reference key="1">
    <citation type="journal article" date="1994" name="Proc. Natl. Acad. Sci. U.S.A.">
        <title>Two highly homologous members of the ClC chloride channel family in both rat and human kidney.</title>
        <authorList>
            <person name="Kieferle S."/>
            <person name="Fong P."/>
            <person name="Bens M."/>
            <person name="Vandewalle A."/>
            <person name="Jentsch T."/>
        </authorList>
    </citation>
    <scope>NUCLEOTIDE SEQUENCE [MRNA] (ISOFORM 1)</scope>
    <source>
        <tissue>Kidney</tissue>
    </source>
</reference>
<reference key="2">
    <citation type="journal article" date="1994" name="J. Biol. Chem.">
        <title>Two isoforms of a chloride channel predominantly expressed in thick ascending limb of Henle's loop and collecting ducts of rat kidney.</title>
        <authorList>
            <person name="Adachi S."/>
            <person name="Uchida S."/>
            <person name="Hata M."/>
            <person name="Hirose M."/>
            <person name="Marumo F."/>
            <person name="Sasaki S."/>
            <person name="Ito H."/>
        </authorList>
    </citation>
    <scope>NUCLEOTIDE SEQUENCE [MRNA] (ISOFORMS 1 AND 2)</scope>
    <source>
        <tissue>Kidney</tissue>
    </source>
</reference>
<reference key="3">
    <citation type="journal article" date="2002" name="Pflugers Arch.">
        <title>Barttin increases surface expression and changes current properties of ClC-K channels.</title>
        <authorList>
            <person name="Waldegger S."/>
            <person name="Jeck N."/>
            <person name="Barth P."/>
            <person name="Peters M."/>
            <person name="Vitzthum H."/>
            <person name="Wolf K."/>
            <person name="Kurtz A."/>
            <person name="Konrad M."/>
            <person name="Seyberth H.W."/>
        </authorList>
    </citation>
    <scope>INTERACTION WITH BSND</scope>
</reference>
<reference key="4">
    <citation type="journal article" date="2003" name="Histochem. Cell Biol.">
        <title>Molecular mechanisms of Bartter syndrome caused by mutations in the BSND gene.</title>
        <authorList>
            <person name="Hayama A."/>
            <person name="Rai T."/>
            <person name="Sasaki S."/>
            <person name="Uchida S."/>
        </authorList>
    </citation>
    <scope>SUBUNIT</scope>
    <scope>SUBCELLULAR LOCATION</scope>
    <scope>INDUCTION</scope>
</reference>
<comment type="function">
    <text evidence="5 6">Anion-selective channel permeable to small monovalent anions with ion selectivity for chloride &gt; bromide &gt; nitrate &gt; iodide (By similarity). Forms a homodimeric channel where each subunit has its own ion conduction pathway. May conduct double-barreled currents controlled by two types of gates, two fast gates that control each subunit independently and a slow common gate that opens and shuts off both subunits simultaneously (By similarity). Assembles with the regulatory subunit BSND/Barttin for sorting at the basolateral plasma membrane domain and functional switch to the ion conducting state. CLCNKB:BSND channels display mostly a linear current-voltage relationship controlled by common gate (By similarity). Mediates chloride conductance along nephron segments, namely the thick ascending limb of Henle's loop, convoluted tubule and the collecting duct, contributing to the maintenance of systemic acid-base and electrolyte homeostasis (By similarity). Conducts chloride currents in the stria vascularis of the inner ear to establish the endocochlear potential necessary for normal hearing (By similarity).</text>
</comment>
<comment type="catalytic activity">
    <reaction evidence="5">
        <text>chloride(in) = chloride(out)</text>
        <dbReference type="Rhea" id="RHEA:29823"/>
        <dbReference type="ChEBI" id="CHEBI:17996"/>
    </reaction>
</comment>
<comment type="catalytic activity">
    <reaction evidence="5">
        <text>iodide(out) = iodide(in)</text>
        <dbReference type="Rhea" id="RHEA:66324"/>
        <dbReference type="ChEBI" id="CHEBI:16382"/>
    </reaction>
</comment>
<comment type="catalytic activity">
    <reaction evidence="5">
        <text>nitrate(in) = nitrate(out)</text>
        <dbReference type="Rhea" id="RHEA:34923"/>
        <dbReference type="ChEBI" id="CHEBI:17632"/>
    </reaction>
</comment>
<comment type="catalytic activity">
    <reaction evidence="5">
        <text>bromide(in) = bromide(out)</text>
        <dbReference type="Rhea" id="RHEA:75383"/>
        <dbReference type="ChEBI" id="CHEBI:15858"/>
    </reaction>
</comment>
<comment type="subunit">
    <text evidence="4 9 10">Homodimer (By similarity). Interacts with BSND.</text>
</comment>
<comment type="subcellular location">
    <subcellularLocation>
        <location evidence="5">Basolateral cell membrane</location>
        <topology evidence="7">Multi-pass membrane protein</topology>
    </subcellularLocation>
    <text evidence="10">Recruited to the plasma membrane in the presence of BSND protein, whereas remains in the Golgi in its absence.</text>
</comment>
<comment type="alternative products">
    <event type="alternative splicing"/>
    <isoform>
        <id>P51802-1</id>
        <name>1</name>
        <name>ClC-K2L</name>
        <sequence type="displayed"/>
    </isoform>
    <isoform>
        <id>P51802-2</id>
        <name>2</name>
        <name>ClC-K2S</name>
        <sequence type="described" ref="VSP_001049"/>
    </isoform>
</comment>
<comment type="tissue specificity">
    <text>Expressed predominantly in the kidney. Expressed in all segments of the nephron examined, including the S2 segment and the glomerulus.</text>
</comment>
<comment type="induction">
    <text evidence="10">Expression is consitently weaker in the absence of BSND protein expression than it is in its presence. The half-life with BSND protein is much longer than that without it. Rapidly degraded without BSND protein, exhibiting a very short half-life of less than 1 hour.</text>
</comment>
<comment type="PTM">
    <text evidence="5">N-glycosylated.</text>
</comment>
<comment type="similarity">
    <text evidence="13">Belongs to the chloride channel (TC 2.A.49) family. CLCNKB subfamily.</text>
</comment>
<organism>
    <name type="scientific">Rattus norvegicus</name>
    <name type="common">Rat</name>
    <dbReference type="NCBI Taxonomy" id="10116"/>
    <lineage>
        <taxon>Eukaryota</taxon>
        <taxon>Metazoa</taxon>
        <taxon>Chordata</taxon>
        <taxon>Craniata</taxon>
        <taxon>Vertebrata</taxon>
        <taxon>Euteleostomi</taxon>
        <taxon>Mammalia</taxon>
        <taxon>Eutheria</taxon>
        <taxon>Euarchontoglires</taxon>
        <taxon>Glires</taxon>
        <taxon>Rodentia</taxon>
        <taxon>Myomorpha</taxon>
        <taxon>Muroidea</taxon>
        <taxon>Muridae</taxon>
        <taxon>Murinae</taxon>
        <taxon>Rattus</taxon>
    </lineage>
</organism>